<proteinExistence type="evidence at protein level"/>
<accession>P16397</accession>
<dbReference type="EC" id="3.4.21.-"/>
<dbReference type="EMBL" id="M29035">
    <property type="protein sequence ID" value="AAA62679.1"/>
    <property type="molecule type" value="Genomic_DNA"/>
</dbReference>
<dbReference type="EMBL" id="J05400">
    <property type="protein sequence ID" value="AAA83362.1"/>
    <property type="molecule type" value="Genomic_DNA"/>
</dbReference>
<dbReference type="EMBL" id="AL009126">
    <property type="protein sequence ID" value="CAB13403.1"/>
    <property type="molecule type" value="Genomic_DNA"/>
</dbReference>
<dbReference type="EMBL" id="M22630">
    <property type="protein sequence ID" value="AAA22458.1"/>
    <property type="molecule type" value="Genomic_DNA"/>
</dbReference>
<dbReference type="EMBL" id="X17344">
    <property type="protein sequence ID" value="CAA35224.1"/>
    <property type="molecule type" value="Genomic_DNA"/>
</dbReference>
<dbReference type="PIR" id="A36734">
    <property type="entry name" value="A36734"/>
</dbReference>
<dbReference type="RefSeq" id="NP_389413.1">
    <property type="nucleotide sequence ID" value="NC_000964.3"/>
</dbReference>
<dbReference type="RefSeq" id="WP_003245629.1">
    <property type="nucleotide sequence ID" value="NZ_OZ025638.1"/>
</dbReference>
<dbReference type="SMR" id="P16397"/>
<dbReference type="FunCoup" id="P16397">
    <property type="interactions" value="25"/>
</dbReference>
<dbReference type="STRING" id="224308.BSU15300"/>
<dbReference type="MEROPS" id="S08.017"/>
<dbReference type="PaxDb" id="224308-BSU15300"/>
<dbReference type="EnsemblBacteria" id="CAB13403">
    <property type="protein sequence ID" value="CAB13403"/>
    <property type="gene ID" value="BSU_15300"/>
</dbReference>
<dbReference type="GeneID" id="939695"/>
<dbReference type="KEGG" id="bsu:BSU15300"/>
<dbReference type="PATRIC" id="fig|224308.179.peg.1668"/>
<dbReference type="eggNOG" id="COG1404">
    <property type="taxonomic scope" value="Bacteria"/>
</dbReference>
<dbReference type="eggNOG" id="COG4412">
    <property type="taxonomic scope" value="Bacteria"/>
</dbReference>
<dbReference type="InParanoid" id="P16397"/>
<dbReference type="OrthoDB" id="9798386at2"/>
<dbReference type="BioCyc" id="BSUB:BSU15300-MONOMER"/>
<dbReference type="Proteomes" id="UP000001570">
    <property type="component" value="Chromosome"/>
</dbReference>
<dbReference type="GO" id="GO:0005576">
    <property type="term" value="C:extracellular region"/>
    <property type="evidence" value="ECO:0007669"/>
    <property type="project" value="UniProtKB-SubCell"/>
</dbReference>
<dbReference type="GO" id="GO:0004252">
    <property type="term" value="F:serine-type endopeptidase activity"/>
    <property type="evidence" value="ECO:0007669"/>
    <property type="project" value="InterPro"/>
</dbReference>
<dbReference type="GO" id="GO:0006508">
    <property type="term" value="P:proteolysis"/>
    <property type="evidence" value="ECO:0007669"/>
    <property type="project" value="UniProtKB-KW"/>
</dbReference>
<dbReference type="CDD" id="cd07481">
    <property type="entry name" value="Peptidases_S8_BacillopeptidaseF-like"/>
    <property type="match status" value="1"/>
</dbReference>
<dbReference type="FunFam" id="3.40.50.200:FF:000043">
    <property type="entry name" value="Peptidase S8"/>
    <property type="match status" value="1"/>
</dbReference>
<dbReference type="Gene3D" id="2.60.120.200">
    <property type="match status" value="1"/>
</dbReference>
<dbReference type="Gene3D" id="2.60.40.1120">
    <property type="entry name" value="Carboxypeptidase-like, regulatory domain"/>
    <property type="match status" value="2"/>
</dbReference>
<dbReference type="Gene3D" id="2.60.40.10">
    <property type="entry name" value="Immunoglobulins"/>
    <property type="match status" value="2"/>
</dbReference>
<dbReference type="Gene3D" id="3.40.50.200">
    <property type="entry name" value="Peptidase S8/S53 domain"/>
    <property type="match status" value="1"/>
</dbReference>
<dbReference type="InterPro" id="IPR033857">
    <property type="entry name" value="Bacillopeptidase_F"/>
</dbReference>
<dbReference type="InterPro" id="IPR008969">
    <property type="entry name" value="CarboxyPept-like_regulatory"/>
</dbReference>
<dbReference type="InterPro" id="IPR013320">
    <property type="entry name" value="ConA-like_dom_sf"/>
</dbReference>
<dbReference type="InterPro" id="IPR013783">
    <property type="entry name" value="Ig-like_fold"/>
</dbReference>
<dbReference type="InterPro" id="IPR012103">
    <property type="entry name" value="Pept_S8A_Bpr"/>
</dbReference>
<dbReference type="InterPro" id="IPR000209">
    <property type="entry name" value="Peptidase_S8/S53_dom"/>
</dbReference>
<dbReference type="InterPro" id="IPR036852">
    <property type="entry name" value="Peptidase_S8/S53_dom_sf"/>
</dbReference>
<dbReference type="InterPro" id="IPR051048">
    <property type="entry name" value="Peptidase_S8/S53_subtilisin"/>
</dbReference>
<dbReference type="InterPro" id="IPR022398">
    <property type="entry name" value="Peptidase_S8_His-AS"/>
</dbReference>
<dbReference type="InterPro" id="IPR023828">
    <property type="entry name" value="Peptidase_S8_Ser-AS"/>
</dbReference>
<dbReference type="InterPro" id="IPR015500">
    <property type="entry name" value="Peptidase_S8_subtilisin-rel"/>
</dbReference>
<dbReference type="InterPro" id="IPR010259">
    <property type="entry name" value="S8pro/Inhibitor_I9"/>
</dbReference>
<dbReference type="PANTHER" id="PTHR43399:SF4">
    <property type="entry name" value="CELL WALL-ASSOCIATED PROTEASE"/>
    <property type="match status" value="1"/>
</dbReference>
<dbReference type="PANTHER" id="PTHR43399">
    <property type="entry name" value="SUBTILISIN-RELATED"/>
    <property type="match status" value="1"/>
</dbReference>
<dbReference type="Pfam" id="PF13715">
    <property type="entry name" value="CarbopepD_reg_2"/>
    <property type="match status" value="1"/>
</dbReference>
<dbReference type="Pfam" id="PF13620">
    <property type="entry name" value="CarboxypepD_reg"/>
    <property type="match status" value="1"/>
</dbReference>
<dbReference type="Pfam" id="PF09136">
    <property type="entry name" value="Glucodextran_B"/>
    <property type="match status" value="2"/>
</dbReference>
<dbReference type="Pfam" id="PF20773">
    <property type="entry name" value="InhA-like_MAM"/>
    <property type="match status" value="1"/>
</dbReference>
<dbReference type="Pfam" id="PF05922">
    <property type="entry name" value="Inhibitor_I9"/>
    <property type="match status" value="1"/>
</dbReference>
<dbReference type="Pfam" id="PF00082">
    <property type="entry name" value="Peptidase_S8"/>
    <property type="match status" value="1"/>
</dbReference>
<dbReference type="PIRSF" id="PIRSF015477">
    <property type="entry name" value="Bpr"/>
    <property type="match status" value="1"/>
</dbReference>
<dbReference type="PRINTS" id="PR00723">
    <property type="entry name" value="SUBTILISIN"/>
</dbReference>
<dbReference type="SUPFAM" id="SSF49464">
    <property type="entry name" value="Carboxypeptidase regulatory domain-like"/>
    <property type="match status" value="2"/>
</dbReference>
<dbReference type="SUPFAM" id="SSF49899">
    <property type="entry name" value="Concanavalin A-like lectins/glucanases"/>
    <property type="match status" value="1"/>
</dbReference>
<dbReference type="SUPFAM" id="SSF52743">
    <property type="entry name" value="Subtilisin-like"/>
    <property type="match status" value="1"/>
</dbReference>
<dbReference type="PROSITE" id="PS51892">
    <property type="entry name" value="SUBTILASE"/>
    <property type="match status" value="1"/>
</dbReference>
<dbReference type="PROSITE" id="PS00137">
    <property type="entry name" value="SUBTILASE_HIS"/>
    <property type="match status" value="1"/>
</dbReference>
<dbReference type="PROSITE" id="PS00138">
    <property type="entry name" value="SUBTILASE_SER"/>
    <property type="match status" value="1"/>
</dbReference>
<protein>
    <recommendedName>
        <fullName>Bacillopeptidase F</fullName>
        <ecNumber>3.4.21.-</ecNumber>
    </recommendedName>
    <alternativeName>
        <fullName>90 kDa serine proteinase</fullName>
    </alternativeName>
    <alternativeName>
        <fullName>Esterase</fullName>
    </alternativeName>
    <alternativeName>
        <fullName>RP-I protease</fullName>
    </alternativeName>
</protein>
<gene>
    <name type="primary">bpr</name>
    <name type="synonym">bpf</name>
    <name type="ordered locus">BSU15300</name>
</gene>
<organism>
    <name type="scientific">Bacillus subtilis (strain 168)</name>
    <dbReference type="NCBI Taxonomy" id="224308"/>
    <lineage>
        <taxon>Bacteria</taxon>
        <taxon>Bacillati</taxon>
        <taxon>Bacillota</taxon>
        <taxon>Bacilli</taxon>
        <taxon>Bacillales</taxon>
        <taxon>Bacillaceae</taxon>
        <taxon>Bacillus</taxon>
    </lineage>
</organism>
<keyword id="KW-0903">Direct protein sequencing</keyword>
<keyword id="KW-0378">Hydrolase</keyword>
<keyword id="KW-0645">Protease</keyword>
<keyword id="KW-1185">Reference proteome</keyword>
<keyword id="KW-0964">Secreted</keyword>
<keyword id="KW-0720">Serine protease</keyword>
<keyword id="KW-0732">Signal</keyword>
<keyword id="KW-0865">Zymogen</keyword>
<evidence type="ECO:0000255" key="1"/>
<evidence type="ECO:0000255" key="2">
    <source>
        <dbReference type="PROSITE-ProRule" id="PRU01240"/>
    </source>
</evidence>
<evidence type="ECO:0000256" key="3">
    <source>
        <dbReference type="SAM" id="MobiDB-lite"/>
    </source>
</evidence>
<evidence type="ECO:0000305" key="4"/>
<feature type="signal peptide">
    <location>
        <begin position="1"/>
        <end position="30"/>
    </location>
</feature>
<feature type="propeptide" id="PRO_0000027172" evidence="1">
    <location>
        <begin position="31"/>
        <end position="194"/>
    </location>
</feature>
<feature type="chain" id="PRO_0000027173" description="Bacillopeptidase F">
    <location>
        <begin position="195"/>
        <end position="755"/>
    </location>
</feature>
<feature type="propeptide" id="PRO_0000027174" evidence="1">
    <location>
        <begin position="756"/>
        <end position="1433"/>
    </location>
</feature>
<feature type="domain" description="Inhibitor I9" evidence="1">
    <location>
        <begin position="68"/>
        <end position="177"/>
    </location>
</feature>
<feature type="domain" description="Peptidase S8" evidence="2">
    <location>
        <begin position="200"/>
        <end position="512"/>
    </location>
</feature>
<feature type="region of interest" description="Disordered" evidence="3">
    <location>
        <begin position="800"/>
        <end position="830"/>
    </location>
</feature>
<feature type="compositionally biased region" description="Basic residues" evidence="3">
    <location>
        <begin position="808"/>
        <end position="821"/>
    </location>
</feature>
<feature type="active site" description="Charge relay system" evidence="2">
    <location>
        <position position="227"/>
    </location>
</feature>
<feature type="active site" description="Charge relay system" evidence="2">
    <location>
        <position position="274"/>
    </location>
</feature>
<feature type="active site" description="Charge relay system" evidence="2">
    <location>
        <position position="452"/>
    </location>
</feature>
<feature type="sequence conflict" description="In Ref. 7; AA sequence." evidence="4" ref="7">
    <original>T</original>
    <variation>A</variation>
    <location>
        <position position="219"/>
    </location>
</feature>
<feature type="sequence conflict" description="In Ref. 3; AAA83362." evidence="4" ref="3">
    <original>A</original>
    <variation>V</variation>
    <location>
        <position position="393"/>
    </location>
</feature>
<feature type="sequence conflict" description="In Ref. 3." evidence="4" ref="3">
    <original>KHQNKA</original>
    <variation>N</variation>
    <location>
        <begin position="829"/>
        <end position="834"/>
    </location>
</feature>
<feature type="sequence conflict" description="In Ref. 3." evidence="4" ref="3">
    <original>QPQVLP</original>
    <variation>RTRLYS</variation>
    <location>
        <begin position="836"/>
        <end position="841"/>
    </location>
</feature>
<feature type="sequence conflict" description="In Ref. 3." evidence="4" ref="3">
    <original>AQVSVVETG</original>
    <variation>FCRSRHKSV</variation>
    <location>
        <begin position="844"/>
        <end position="852"/>
    </location>
</feature>
<feature type="sequence conflict" description="In Ref. 3." evidence="4" ref="3">
    <location>
        <begin position="853"/>
        <end position="1433"/>
    </location>
</feature>
<sequence length="1433" mass="154578">MRKKTKNRLISSVLSTVVISSLLFPGAAGASSKVTSPSVKKELQSAESIQNKISSSLKKSFKKKEKTTFLIKFKDLANPEKAAKAAVKKAKSKKLSAAKTEYQKRSAVVSSLKVTADESQQDVLKYLNTQKDKGNADQIHSYYVVNGIAVHASKEVMEKVVQFPEVEKVLPNEKRQLFKSSSPFNMKKAQKAIKATDGVEWNVDQIDAPKAWALGYDGTGTVVASIDTGVEWNHPALKEKYRGYNPENPNEPENEMNWYDAVAGEASPYDDLAHGTHVTGTMVGSEPDGTNQIGVAPGAKWIAVKAFSEDGGTDADILEAGEWVLAPKDAEGNPHPEMAPDVVNNSWGGGSGLDEWYRDMVNAWRAADIFPEFSAGNTDLFIPGGPGSIANPANYPESFATGATDINKKLADFSLQGPSPYDEIKPEISAPGVNIRSSVPGQTYEDGWDGTSMAGPHVSAVAALLKQANASLSVDEMEDILTSTAEPLTDSTFPDSPNNGYGHGLVNAFDAVSAVTDGLGKAEGQVSVEGDDQEPPVYQHEKVTEAYEGGSLPLTLTAEDNVSVTSVKLSYKLDQGEWTEITAKRISGDHLKGTYQAEIPDIKGTKLSYKWMIHDFGGHVVSSDVYDVTVKPSITAGYKQDFETAPGGWVASGTNNNWEWGVPSTGPNTAASGEKVYGTNLTGNYANSANMNLVMPPIKAPDSGSLFLQFKSWHNLEDDFDYGYVFVLPEGEKNWEQAGVYNGKTSSWTDEEIDLSAYKGQNIQVMFNLQSDESIAKEGWYIDDVVLSDKSAGKTVKKNKLGVEKPSGKQKKKPVNPKKAKPSANTAVKHQNKAIQPQVLPLKAQVSVVETGKSTYSDQSTGQYTLKHKAGDYTLMAEAYGYQSKTQKVSLKTDQTTQANFTLEEMKKGTLKGTVINKTTGEPVTGASVYVVEDAAVEPAMTNDKGEYMLEAYEGAYTIKVAAPGYYSDEFSVELKGDVTKETALKPFVGYPGEIAYDDGTAENANSYFAAGNGWAVKMTLADGKDKGMLTGGLFRFWDTEFPDPGGTEFKVEVYDATGKDGAPGKKIAGPFNAEALRNGEWTKVDLSSKGIMVDKDFYLVYIQSKPDPYSPGLAMDETGQNSGRNWQYIDGKWQPGDKADGNYMIRALVDYEAAVPEITSPTDKSYTNKDSVTVKGNASPGTTVHIYNGEKEAGETKAAADGTFHAGIILNKGENELTATASTDNGTTDASSPITVTLDQEKPELTLDNPKDGGKTNKETLTVKGAVSDDNLKDVKVNGKKATVADGSYSARILLENGRNEIKVIATDLAGNKTTKKTVIDVNFDKPVISGLIPGEDKNLKAGESVKIAFSSAEDLDATFTIRMPLTNARASVQNATELPLREISPGRYEGYWTATSSIKAKGAKVEVIVRDDYGNETRKTANGKLNMNTEN</sequence>
<name>SUBF_BACSU</name>
<comment type="subcellular location">
    <subcellularLocation>
        <location>Secreted</location>
    </subcellularLocation>
</comment>
<comment type="similarity">
    <text evidence="4">Belongs to the peptidase S8 family.</text>
</comment>
<reference key="1">
    <citation type="journal article" date="1990" name="J. Bacteriol.">
        <title>Bacillopeptidase F of Bacillus subtilis: purification of the protein and cloning of the gene.</title>
        <authorList>
            <person name="Sloma A."/>
            <person name="Rufo G.A. Jr."/>
            <person name="Rudolph C.F."/>
            <person name="Sullivan B.J."/>
            <person name="Theriault K.A."/>
            <person name="Pero J."/>
        </authorList>
    </citation>
    <scope>NUCLEOTIDE SEQUENCE [GENOMIC DNA]</scope>
    <scope>PROTEIN SEQUENCE OF 195-222</scope>
</reference>
<reference key="2">
    <citation type="journal article" date="1990" name="J. Bacteriol.">
        <authorList>
            <person name="Sloma A."/>
            <person name="Rufo G.A. Jr."/>
            <person name="Rudolph C.F."/>
            <person name="Sullivan B.J."/>
            <person name="Theriault K.A."/>
            <person name="Pero J."/>
        </authorList>
    </citation>
    <scope>ERRATUM OF PUBMED:2106512</scope>
    <scope>SEQUENCE REVISION</scope>
</reference>
<reference key="3">
    <citation type="journal article" date="1990" name="J. Biol. Chem.">
        <title>Cloning, genetic organization, and characterization of a structural gene encoding bacillopeptidase F from Bacillus subtilis.</title>
        <authorList>
            <person name="Wu X.-C."/>
            <person name="Nathoo S."/>
            <person name="Pang A.S.-H."/>
            <person name="Carne T."/>
            <person name="Wang S.-L."/>
        </authorList>
    </citation>
    <scope>NUCLEOTIDE SEQUENCE [GENOMIC DNA]</scope>
</reference>
<reference key="4">
    <citation type="journal article" date="1997" name="Nature">
        <title>The complete genome sequence of the Gram-positive bacterium Bacillus subtilis.</title>
        <authorList>
            <person name="Kunst F."/>
            <person name="Ogasawara N."/>
            <person name="Moszer I."/>
            <person name="Albertini A.M."/>
            <person name="Alloni G."/>
            <person name="Azevedo V."/>
            <person name="Bertero M.G."/>
            <person name="Bessieres P."/>
            <person name="Bolotin A."/>
            <person name="Borchert S."/>
            <person name="Borriss R."/>
            <person name="Boursier L."/>
            <person name="Brans A."/>
            <person name="Braun M."/>
            <person name="Brignell S.C."/>
            <person name="Bron S."/>
            <person name="Brouillet S."/>
            <person name="Bruschi C.V."/>
            <person name="Caldwell B."/>
            <person name="Capuano V."/>
            <person name="Carter N.M."/>
            <person name="Choi S.-K."/>
            <person name="Codani J.-J."/>
            <person name="Connerton I.F."/>
            <person name="Cummings N.J."/>
            <person name="Daniel R.A."/>
            <person name="Denizot F."/>
            <person name="Devine K.M."/>
            <person name="Duesterhoeft A."/>
            <person name="Ehrlich S.D."/>
            <person name="Emmerson P.T."/>
            <person name="Entian K.-D."/>
            <person name="Errington J."/>
            <person name="Fabret C."/>
            <person name="Ferrari E."/>
            <person name="Foulger D."/>
            <person name="Fritz C."/>
            <person name="Fujita M."/>
            <person name="Fujita Y."/>
            <person name="Fuma S."/>
            <person name="Galizzi A."/>
            <person name="Galleron N."/>
            <person name="Ghim S.-Y."/>
            <person name="Glaser P."/>
            <person name="Goffeau A."/>
            <person name="Golightly E.J."/>
            <person name="Grandi G."/>
            <person name="Guiseppi G."/>
            <person name="Guy B.J."/>
            <person name="Haga K."/>
            <person name="Haiech J."/>
            <person name="Harwood C.R."/>
            <person name="Henaut A."/>
            <person name="Hilbert H."/>
            <person name="Holsappel S."/>
            <person name="Hosono S."/>
            <person name="Hullo M.-F."/>
            <person name="Itaya M."/>
            <person name="Jones L.-M."/>
            <person name="Joris B."/>
            <person name="Karamata D."/>
            <person name="Kasahara Y."/>
            <person name="Klaerr-Blanchard M."/>
            <person name="Klein C."/>
            <person name="Kobayashi Y."/>
            <person name="Koetter P."/>
            <person name="Koningstein G."/>
            <person name="Krogh S."/>
            <person name="Kumano M."/>
            <person name="Kurita K."/>
            <person name="Lapidus A."/>
            <person name="Lardinois S."/>
            <person name="Lauber J."/>
            <person name="Lazarevic V."/>
            <person name="Lee S.-M."/>
            <person name="Levine A."/>
            <person name="Liu H."/>
            <person name="Masuda S."/>
            <person name="Mauel C."/>
            <person name="Medigue C."/>
            <person name="Medina N."/>
            <person name="Mellado R.P."/>
            <person name="Mizuno M."/>
            <person name="Moestl D."/>
            <person name="Nakai S."/>
            <person name="Noback M."/>
            <person name="Noone D."/>
            <person name="O'Reilly M."/>
            <person name="Ogawa K."/>
            <person name="Ogiwara A."/>
            <person name="Oudega B."/>
            <person name="Park S.-H."/>
            <person name="Parro V."/>
            <person name="Pohl T.M."/>
            <person name="Portetelle D."/>
            <person name="Porwollik S."/>
            <person name="Prescott A.M."/>
            <person name="Presecan E."/>
            <person name="Pujic P."/>
            <person name="Purnelle B."/>
            <person name="Rapoport G."/>
            <person name="Rey M."/>
            <person name="Reynolds S."/>
            <person name="Rieger M."/>
            <person name="Rivolta C."/>
            <person name="Rocha E."/>
            <person name="Roche B."/>
            <person name="Rose M."/>
            <person name="Sadaie Y."/>
            <person name="Sato T."/>
            <person name="Scanlan E."/>
            <person name="Schleich S."/>
            <person name="Schroeter R."/>
            <person name="Scoffone F."/>
            <person name="Sekiguchi J."/>
            <person name="Sekowska A."/>
            <person name="Seror S.J."/>
            <person name="Serror P."/>
            <person name="Shin B.-S."/>
            <person name="Soldo B."/>
            <person name="Sorokin A."/>
            <person name="Tacconi E."/>
            <person name="Takagi T."/>
            <person name="Takahashi H."/>
            <person name="Takemaru K."/>
            <person name="Takeuchi M."/>
            <person name="Tamakoshi A."/>
            <person name="Tanaka T."/>
            <person name="Terpstra P."/>
            <person name="Tognoni A."/>
            <person name="Tosato V."/>
            <person name="Uchiyama S."/>
            <person name="Vandenbol M."/>
            <person name="Vannier F."/>
            <person name="Vassarotti A."/>
            <person name="Viari A."/>
            <person name="Wambutt R."/>
            <person name="Wedler E."/>
            <person name="Wedler H."/>
            <person name="Weitzenegger T."/>
            <person name="Winters P."/>
            <person name="Wipat A."/>
            <person name="Yamamoto H."/>
            <person name="Yamane K."/>
            <person name="Yasumoto K."/>
            <person name="Yata K."/>
            <person name="Yoshida K."/>
            <person name="Yoshikawa H.-F."/>
            <person name="Zumstein E."/>
            <person name="Yoshikawa H."/>
            <person name="Danchin A."/>
        </authorList>
    </citation>
    <scope>NUCLEOTIDE SEQUENCE [LARGE SCALE GENOMIC DNA]</scope>
    <source>
        <strain>168</strain>
    </source>
</reference>
<reference key="5">
    <citation type="journal article" date="1988" name="J. Bacteriol.">
        <title>Cloning and characterization of Bacillus subtilis homologs of Escherichia coli cell division genes ftsZ and ftsA.</title>
        <authorList>
            <person name="Beall B."/>
            <person name="Lowe M."/>
            <person name="Lutkenhaus J."/>
        </authorList>
    </citation>
    <scope>NUCLEOTIDE SEQUENCE [GENOMIC DNA] OF 1-211</scope>
</reference>
<reference key="6">
    <citation type="journal article" date="1990" name="Nucleic Acids Res.">
        <title>Nucleotide sequence of the sporulation gene spoIIGA from Bacillus subtilis.</title>
        <authorList>
            <person name="Masuda E.S."/>
            <person name="Anaguchi H."/>
            <person name="Sato T."/>
            <person name="Takeuchi M."/>
            <person name="Kobayashi Y."/>
        </authorList>
    </citation>
    <scope>NUCLEOTIDE SEQUENCE [GENOMIC DNA] OF 1410-1433</scope>
    <source>
        <strain>168 / Marburg / ATCC 6051 / DSM 10 / JCM 1465 / NBRC 13719 / NCIMB 3610 / NRRL NRS-744 / VKM B-501</strain>
    </source>
</reference>
<reference key="7">
    <citation type="journal article" date="1992" name="Biosci. Biotechnol. Biochem.">
        <title>Purification of a new extracellular 90-kDa serine proteinase with isoelectric point of 3.9 from Bacillus subtilis (natto) and elucidation of its distinct mode of action.</title>
        <authorList>
            <person name="Kato T."/>
            <person name="Yamagata Y."/>
            <person name="Arai T."/>
            <person name="Ichishima E."/>
        </authorList>
    </citation>
    <scope>PROTEIN SEQUENCE OF 195-219</scope>
    <source>
        <strain>Natto 16</strain>
    </source>
</reference>